<reference key="1">
    <citation type="journal article" date="2007" name="J. Bacteriol.">
        <title>The complete genome sequence of the lactic acid bacterial paradigm Lactococcus lactis subsp. cremoris MG1363.</title>
        <authorList>
            <person name="Wegmann U."/>
            <person name="O'Connell-Motherway M."/>
            <person name="Zomer A."/>
            <person name="Buist G."/>
            <person name="Shearman C."/>
            <person name="Canchaya C."/>
            <person name="Ventura M."/>
            <person name="Goesmann A."/>
            <person name="Gasson M.J."/>
            <person name="Kuipers O.P."/>
            <person name="van Sinderen D."/>
            <person name="Kok J."/>
        </authorList>
    </citation>
    <scope>NUCLEOTIDE SEQUENCE [LARGE SCALE GENOMIC DNA]</scope>
    <source>
        <strain>MG1363</strain>
    </source>
</reference>
<keyword id="KW-0963">Cytoplasm</keyword>
<keyword id="KW-0489">Methyltransferase</keyword>
<keyword id="KW-0949">S-adenosyl-L-methionine</keyword>
<keyword id="KW-0808">Transferase</keyword>
<organism>
    <name type="scientific">Lactococcus lactis subsp. cremoris (strain MG1363)</name>
    <dbReference type="NCBI Taxonomy" id="416870"/>
    <lineage>
        <taxon>Bacteria</taxon>
        <taxon>Bacillati</taxon>
        <taxon>Bacillota</taxon>
        <taxon>Bacilli</taxon>
        <taxon>Lactobacillales</taxon>
        <taxon>Streptococcaceae</taxon>
        <taxon>Lactococcus</taxon>
        <taxon>Lactococcus cremoris subsp. cremoris</taxon>
    </lineage>
</organism>
<accession>A2RHI1</accession>
<dbReference type="EC" id="2.1.1.-" evidence="1"/>
<dbReference type="EMBL" id="AM406671">
    <property type="protein sequence ID" value="CAL96717.1"/>
    <property type="molecule type" value="Genomic_DNA"/>
</dbReference>
<dbReference type="RefSeq" id="WP_011834209.1">
    <property type="nucleotide sequence ID" value="NC_009004.1"/>
</dbReference>
<dbReference type="SMR" id="A2RHI1"/>
<dbReference type="STRING" id="416870.llmg_0110"/>
<dbReference type="KEGG" id="llm:llmg_0110"/>
<dbReference type="eggNOG" id="COG2264">
    <property type="taxonomic scope" value="Bacteria"/>
</dbReference>
<dbReference type="HOGENOM" id="CLU_049382_0_1_9"/>
<dbReference type="OrthoDB" id="9785995at2"/>
<dbReference type="PhylomeDB" id="A2RHI1"/>
<dbReference type="Proteomes" id="UP000000364">
    <property type="component" value="Chromosome"/>
</dbReference>
<dbReference type="GO" id="GO:0005737">
    <property type="term" value="C:cytoplasm"/>
    <property type="evidence" value="ECO:0007669"/>
    <property type="project" value="UniProtKB-SubCell"/>
</dbReference>
<dbReference type="GO" id="GO:0016279">
    <property type="term" value="F:protein-lysine N-methyltransferase activity"/>
    <property type="evidence" value="ECO:0007669"/>
    <property type="project" value="RHEA"/>
</dbReference>
<dbReference type="GO" id="GO:0032259">
    <property type="term" value="P:methylation"/>
    <property type="evidence" value="ECO:0007669"/>
    <property type="project" value="UniProtKB-KW"/>
</dbReference>
<dbReference type="CDD" id="cd02440">
    <property type="entry name" value="AdoMet_MTases"/>
    <property type="match status" value="1"/>
</dbReference>
<dbReference type="Gene3D" id="3.40.50.150">
    <property type="entry name" value="Vaccinia Virus protein VP39"/>
    <property type="match status" value="1"/>
</dbReference>
<dbReference type="HAMAP" id="MF_00735">
    <property type="entry name" value="Methyltr_PrmA"/>
    <property type="match status" value="1"/>
</dbReference>
<dbReference type="InterPro" id="IPR050078">
    <property type="entry name" value="Ribosomal_L11_MeTrfase_PrmA"/>
</dbReference>
<dbReference type="InterPro" id="IPR004498">
    <property type="entry name" value="Ribosomal_PrmA_MeTrfase"/>
</dbReference>
<dbReference type="InterPro" id="IPR029063">
    <property type="entry name" value="SAM-dependent_MTases_sf"/>
</dbReference>
<dbReference type="NCBIfam" id="TIGR00406">
    <property type="entry name" value="prmA"/>
    <property type="match status" value="1"/>
</dbReference>
<dbReference type="PANTHER" id="PTHR43648">
    <property type="entry name" value="ELECTRON TRANSFER FLAVOPROTEIN BETA SUBUNIT LYSINE METHYLTRANSFERASE"/>
    <property type="match status" value="1"/>
</dbReference>
<dbReference type="PANTHER" id="PTHR43648:SF1">
    <property type="entry name" value="ELECTRON TRANSFER FLAVOPROTEIN BETA SUBUNIT LYSINE METHYLTRANSFERASE"/>
    <property type="match status" value="1"/>
</dbReference>
<dbReference type="Pfam" id="PF06325">
    <property type="entry name" value="PrmA"/>
    <property type="match status" value="1"/>
</dbReference>
<dbReference type="PIRSF" id="PIRSF000401">
    <property type="entry name" value="RPL11_MTase"/>
    <property type="match status" value="1"/>
</dbReference>
<dbReference type="SUPFAM" id="SSF53335">
    <property type="entry name" value="S-adenosyl-L-methionine-dependent methyltransferases"/>
    <property type="match status" value="1"/>
</dbReference>
<evidence type="ECO:0000255" key="1">
    <source>
        <dbReference type="HAMAP-Rule" id="MF_00735"/>
    </source>
</evidence>
<sequence>MNNWNSITIKISREAEETISALLIEAGSAGVEINDSADYLNHEDQFGEVLPEIEQSELVEITAYYPENMPIVELKAEIEHKIANLADYFSLTGLSVTTNNLSETNWAEAWKKYFEPARITHDLTIVPSWTKDYLATGSEKLIRLDPGMAFGTGTHPTTKMSLYALEQVLRGGETLLDVGTGSGVLSVAATYLGAAEIFAYDIDEVAVRVALENIELNPGHEKIHVSANNLLEGIDKKADVIVANILADILVLMTDDAFRLVKEEGYLIMSGIIADKADMVIASAENAGFFLETRMIQGEWNCLIFKKTENREGVIGG</sequence>
<comment type="function">
    <text evidence="1">Methylates ribosomal protein L11.</text>
</comment>
<comment type="catalytic activity">
    <reaction evidence="1">
        <text>L-lysyl-[protein] + 3 S-adenosyl-L-methionine = N(6),N(6),N(6)-trimethyl-L-lysyl-[protein] + 3 S-adenosyl-L-homocysteine + 3 H(+)</text>
        <dbReference type="Rhea" id="RHEA:54192"/>
        <dbReference type="Rhea" id="RHEA-COMP:9752"/>
        <dbReference type="Rhea" id="RHEA-COMP:13826"/>
        <dbReference type="ChEBI" id="CHEBI:15378"/>
        <dbReference type="ChEBI" id="CHEBI:29969"/>
        <dbReference type="ChEBI" id="CHEBI:57856"/>
        <dbReference type="ChEBI" id="CHEBI:59789"/>
        <dbReference type="ChEBI" id="CHEBI:61961"/>
    </reaction>
</comment>
<comment type="subcellular location">
    <subcellularLocation>
        <location evidence="1">Cytoplasm</location>
    </subcellularLocation>
</comment>
<comment type="similarity">
    <text evidence="1">Belongs to the methyltransferase superfamily. PrmA family.</text>
</comment>
<name>PRMA_LACLM</name>
<gene>
    <name evidence="1" type="primary">prmA</name>
    <name type="ordered locus">llmg_0110</name>
</gene>
<protein>
    <recommendedName>
        <fullName evidence="1">Ribosomal protein L11 methyltransferase</fullName>
        <shortName evidence="1">L11 Mtase</shortName>
        <ecNumber evidence="1">2.1.1.-</ecNumber>
    </recommendedName>
</protein>
<feature type="chain" id="PRO_1000046038" description="Ribosomal protein L11 methyltransferase">
    <location>
        <begin position="1"/>
        <end position="317"/>
    </location>
</feature>
<feature type="binding site" evidence="1">
    <location>
        <position position="158"/>
    </location>
    <ligand>
        <name>S-adenosyl-L-methionine</name>
        <dbReference type="ChEBI" id="CHEBI:59789"/>
    </ligand>
</feature>
<feature type="binding site" evidence="1">
    <location>
        <position position="179"/>
    </location>
    <ligand>
        <name>S-adenosyl-L-methionine</name>
        <dbReference type="ChEBI" id="CHEBI:59789"/>
    </ligand>
</feature>
<feature type="binding site" evidence="1">
    <location>
        <position position="201"/>
    </location>
    <ligand>
        <name>S-adenosyl-L-methionine</name>
        <dbReference type="ChEBI" id="CHEBI:59789"/>
    </ligand>
</feature>
<feature type="binding site" evidence="1">
    <location>
        <position position="244"/>
    </location>
    <ligand>
        <name>S-adenosyl-L-methionine</name>
        <dbReference type="ChEBI" id="CHEBI:59789"/>
    </ligand>
</feature>
<proteinExistence type="inferred from homology"/>